<proteinExistence type="inferred from homology"/>
<reference key="1">
    <citation type="journal article" date="2008" name="DNA Res.">
        <title>Complete genome sequence and comparative analysis of the wild-type commensal Escherichia coli strain SE11 isolated from a healthy adult.</title>
        <authorList>
            <person name="Oshima K."/>
            <person name="Toh H."/>
            <person name="Ogura Y."/>
            <person name="Sasamoto H."/>
            <person name="Morita H."/>
            <person name="Park S.-H."/>
            <person name="Ooka T."/>
            <person name="Iyoda S."/>
            <person name="Taylor T.D."/>
            <person name="Hayashi T."/>
            <person name="Itoh K."/>
            <person name="Hattori M."/>
        </authorList>
    </citation>
    <scope>NUCLEOTIDE SEQUENCE [LARGE SCALE GENOMIC DNA]</scope>
    <source>
        <strain>SE11</strain>
    </source>
</reference>
<keyword id="KW-0010">Activator</keyword>
<keyword id="KW-0963">Cytoplasm</keyword>
<keyword id="KW-0238">DNA-binding</keyword>
<keyword id="KW-0804">Transcription</keyword>
<keyword id="KW-0805">Transcription regulation</keyword>
<accession>B6I082</accession>
<comment type="function">
    <text evidence="1">Part of the ecpRABCDE operon, which encodes the E.coli common pilus (ECP). ECP is found in both commensal and pathogenic strains and plays a dual role in early-stage biofilm development and host cell recognition. Positively regulates the expression of the ecp operon (By similarity).</text>
</comment>
<comment type="subcellular location">
    <subcellularLocation>
        <location evidence="3">Cytoplasm</location>
    </subcellularLocation>
</comment>
<comment type="induction">
    <text evidence="1">Negatively regulated by H-NS. Positively autoregulated. Also positively regulated by IHF (By similarity).</text>
</comment>
<comment type="similarity">
    <text evidence="3">Belongs to the EcpR/MatA family.</text>
</comment>
<sequence>MTWQSDYSRDYEVKNHMECQNRSDKYIWSPHDAYFYKGLSELIVDIDRLIYLSLEKIRKDFVFINLNTDSLSEFINRDNEWLSAVKGKQVVLIAARKSEALANYWYYNSNIRGVVYAGLSRDIRKELAYVINGRFLRKDIKKDKITDREMEIIRMTAQGMQPKSIARIENCSVKTVYTHRRNAEAKLYSKIYKLVQ</sequence>
<gene>
    <name type="primary">ecpR</name>
    <name type="synonym">matA</name>
    <name type="ordered locus">ECSE_0312</name>
</gene>
<organism>
    <name type="scientific">Escherichia coli (strain SE11)</name>
    <dbReference type="NCBI Taxonomy" id="409438"/>
    <lineage>
        <taxon>Bacteria</taxon>
        <taxon>Pseudomonadati</taxon>
        <taxon>Pseudomonadota</taxon>
        <taxon>Gammaproteobacteria</taxon>
        <taxon>Enterobacterales</taxon>
        <taxon>Enterobacteriaceae</taxon>
        <taxon>Escherichia</taxon>
    </lineage>
</organism>
<protein>
    <recommendedName>
        <fullName>HTH-type transcriptional regulator EcpR</fullName>
    </recommendedName>
</protein>
<evidence type="ECO:0000250" key="1"/>
<evidence type="ECO:0000255" key="2">
    <source>
        <dbReference type="PROSITE-ProRule" id="PRU00411"/>
    </source>
</evidence>
<evidence type="ECO:0000305" key="3"/>
<feature type="chain" id="PRO_0000369175" description="HTH-type transcriptional regulator EcpR">
    <location>
        <begin position="1"/>
        <end position="196"/>
    </location>
</feature>
<feature type="domain" description="HTH luxR-type" evidence="2">
    <location>
        <begin position="138"/>
        <end position="196"/>
    </location>
</feature>
<feature type="DNA-binding region" description="H-T-H motif" evidence="2">
    <location>
        <begin position="162"/>
        <end position="181"/>
    </location>
</feature>
<dbReference type="EMBL" id="AP009240">
    <property type="protein sequence ID" value="BAG75836.1"/>
    <property type="molecule type" value="Genomic_DNA"/>
</dbReference>
<dbReference type="SMR" id="B6I082"/>
<dbReference type="KEGG" id="ecy:ECSE_0312"/>
<dbReference type="HOGENOM" id="CLU_128111_0_0_6"/>
<dbReference type="Proteomes" id="UP000008199">
    <property type="component" value="Chromosome"/>
</dbReference>
<dbReference type="GO" id="GO:0005737">
    <property type="term" value="C:cytoplasm"/>
    <property type="evidence" value="ECO:0007669"/>
    <property type="project" value="UniProtKB-SubCell"/>
</dbReference>
<dbReference type="GO" id="GO:0003677">
    <property type="term" value="F:DNA binding"/>
    <property type="evidence" value="ECO:0007669"/>
    <property type="project" value="UniProtKB-KW"/>
</dbReference>
<dbReference type="GO" id="GO:0006355">
    <property type="term" value="P:regulation of DNA-templated transcription"/>
    <property type="evidence" value="ECO:0007669"/>
    <property type="project" value="InterPro"/>
</dbReference>
<dbReference type="CDD" id="cd06170">
    <property type="entry name" value="LuxR_C_like"/>
    <property type="match status" value="1"/>
</dbReference>
<dbReference type="Gene3D" id="1.10.10.10">
    <property type="entry name" value="Winged helix-like DNA-binding domain superfamily/Winged helix DNA-binding domain"/>
    <property type="match status" value="1"/>
</dbReference>
<dbReference type="InterPro" id="IPR016032">
    <property type="entry name" value="Sig_transdc_resp-reg_C-effctor"/>
</dbReference>
<dbReference type="InterPro" id="IPR000792">
    <property type="entry name" value="Tscrpt_reg_LuxR_C"/>
</dbReference>
<dbReference type="InterPro" id="IPR036388">
    <property type="entry name" value="WH-like_DNA-bd_sf"/>
</dbReference>
<dbReference type="Pfam" id="PF00196">
    <property type="entry name" value="GerE"/>
    <property type="match status" value="1"/>
</dbReference>
<dbReference type="PRINTS" id="PR00038">
    <property type="entry name" value="HTHLUXR"/>
</dbReference>
<dbReference type="SMART" id="SM00421">
    <property type="entry name" value="HTH_LUXR"/>
    <property type="match status" value="1"/>
</dbReference>
<dbReference type="SUPFAM" id="SSF46894">
    <property type="entry name" value="C-terminal effector domain of the bipartite response regulators"/>
    <property type="match status" value="1"/>
</dbReference>
<dbReference type="PROSITE" id="PS50043">
    <property type="entry name" value="HTH_LUXR_2"/>
    <property type="match status" value="1"/>
</dbReference>
<name>ECPR_ECOSE</name>